<organism>
    <name type="scientific">Rhizopus oryzae</name>
    <name type="common">Mucormycosis agent</name>
    <name type="synonym">Rhizopus arrhizus var. delemar</name>
    <dbReference type="NCBI Taxonomy" id="64495"/>
    <lineage>
        <taxon>Eukaryota</taxon>
        <taxon>Fungi</taxon>
        <taxon>Fungi incertae sedis</taxon>
        <taxon>Mucoromycota</taxon>
        <taxon>Mucoromycotina</taxon>
        <taxon>Mucoromycetes</taxon>
        <taxon>Mucorales</taxon>
        <taxon>Mucorineae</taxon>
        <taxon>Rhizopodaceae</taxon>
        <taxon>Rhizopus</taxon>
    </lineage>
</organism>
<sequence>MKLLKSHPFLSLANSYVIDSPQPSNLNYAWNFGSLLALCLGIQIVTGVTLAMHYTPNIDLAFISVEHIMRDVNYGWMIRYLHANTASFFFLFVYLHIGRGLYYGSYKSPRALPWSIGVIILILMMATAFLGYVLPWGQMSLWGATVITNLLSAIPWIGKDLVEFIWGGFSVDNATLNRFFSLHYLLPFILAALAVMHLLALHEHGSSNPLGITANADRLYMHPYYTFKDLVTIFLFFLVLALFLFYAPNKLGHPDNYIPANPMQTPASIVPEWYLLPFYAILRSIPDKLGGVIAMFGSLLILLAMPLLDLSRVRGSAFRPLMKFFFWLLVVDFLILLWCGSQHVEEPFITLGQFATTFYFSWFLIIVPVVSVIENTLIDLATENKS</sequence>
<dbReference type="EMBL" id="AY863212">
    <property type="protein sequence ID" value="AAW49472.1"/>
    <property type="molecule type" value="Genomic_DNA"/>
</dbReference>
<dbReference type="RefSeq" id="YP_203305.1">
    <property type="nucleotide sequence ID" value="NC_006836.1"/>
</dbReference>
<dbReference type="SMR" id="Q3T4F1"/>
<dbReference type="GeneID" id="3260154"/>
<dbReference type="GO" id="GO:0005743">
    <property type="term" value="C:mitochondrial inner membrane"/>
    <property type="evidence" value="ECO:0007669"/>
    <property type="project" value="UniProtKB-SubCell"/>
</dbReference>
<dbReference type="GO" id="GO:0045275">
    <property type="term" value="C:respiratory chain complex III"/>
    <property type="evidence" value="ECO:0007669"/>
    <property type="project" value="InterPro"/>
</dbReference>
<dbReference type="GO" id="GO:0046872">
    <property type="term" value="F:metal ion binding"/>
    <property type="evidence" value="ECO:0007669"/>
    <property type="project" value="UniProtKB-KW"/>
</dbReference>
<dbReference type="GO" id="GO:0008121">
    <property type="term" value="F:ubiquinol-cytochrome-c reductase activity"/>
    <property type="evidence" value="ECO:0007669"/>
    <property type="project" value="InterPro"/>
</dbReference>
<dbReference type="GO" id="GO:0006122">
    <property type="term" value="P:mitochondrial electron transport, ubiquinol to cytochrome c"/>
    <property type="evidence" value="ECO:0007669"/>
    <property type="project" value="TreeGrafter"/>
</dbReference>
<dbReference type="CDD" id="cd00290">
    <property type="entry name" value="cytochrome_b_C"/>
    <property type="match status" value="1"/>
</dbReference>
<dbReference type="CDD" id="cd00284">
    <property type="entry name" value="Cytochrome_b_N"/>
    <property type="match status" value="1"/>
</dbReference>
<dbReference type="FunFam" id="1.20.810.10:FF:000002">
    <property type="entry name" value="Cytochrome b"/>
    <property type="match status" value="1"/>
</dbReference>
<dbReference type="Gene3D" id="1.20.810.10">
    <property type="entry name" value="Cytochrome Bc1 Complex, Chain C"/>
    <property type="match status" value="1"/>
</dbReference>
<dbReference type="InterPro" id="IPR005798">
    <property type="entry name" value="Cyt_b/b6_C"/>
</dbReference>
<dbReference type="InterPro" id="IPR036150">
    <property type="entry name" value="Cyt_b/b6_C_sf"/>
</dbReference>
<dbReference type="InterPro" id="IPR005797">
    <property type="entry name" value="Cyt_b/b6_N"/>
</dbReference>
<dbReference type="InterPro" id="IPR027387">
    <property type="entry name" value="Cytb/b6-like_sf"/>
</dbReference>
<dbReference type="InterPro" id="IPR030689">
    <property type="entry name" value="Cytochrome_b"/>
</dbReference>
<dbReference type="InterPro" id="IPR048260">
    <property type="entry name" value="Cytochrome_b_C_euk/bac"/>
</dbReference>
<dbReference type="InterPro" id="IPR048259">
    <property type="entry name" value="Cytochrome_b_N_euk/bac"/>
</dbReference>
<dbReference type="InterPro" id="IPR016174">
    <property type="entry name" value="Di-haem_cyt_TM"/>
</dbReference>
<dbReference type="PANTHER" id="PTHR19271">
    <property type="entry name" value="CYTOCHROME B"/>
    <property type="match status" value="1"/>
</dbReference>
<dbReference type="PANTHER" id="PTHR19271:SF16">
    <property type="entry name" value="CYTOCHROME B"/>
    <property type="match status" value="1"/>
</dbReference>
<dbReference type="Pfam" id="PF00032">
    <property type="entry name" value="Cytochrom_B_C"/>
    <property type="match status" value="1"/>
</dbReference>
<dbReference type="Pfam" id="PF00033">
    <property type="entry name" value="Cytochrome_B"/>
    <property type="match status" value="1"/>
</dbReference>
<dbReference type="PIRSF" id="PIRSF038885">
    <property type="entry name" value="COB"/>
    <property type="match status" value="1"/>
</dbReference>
<dbReference type="SUPFAM" id="SSF81648">
    <property type="entry name" value="a domain/subunit of cytochrome bc1 complex (Ubiquinol-cytochrome c reductase)"/>
    <property type="match status" value="1"/>
</dbReference>
<dbReference type="SUPFAM" id="SSF81342">
    <property type="entry name" value="Transmembrane di-heme cytochromes"/>
    <property type="match status" value="1"/>
</dbReference>
<dbReference type="PROSITE" id="PS51003">
    <property type="entry name" value="CYTB_CTER"/>
    <property type="match status" value="1"/>
</dbReference>
<dbReference type="PROSITE" id="PS51002">
    <property type="entry name" value="CYTB_NTER"/>
    <property type="match status" value="1"/>
</dbReference>
<gene>
    <name type="primary">cob</name>
    <name type="synonym">cytB</name>
</gene>
<comment type="function">
    <text evidence="3">Component of the ubiquinol-cytochrome c reductase complex (complex III or cytochrome b-c1 complex) that is part of the mitochondrial respiratory chain. The b-c1 complex mediates electron transfer from ubiquinol to cytochrome c. Contributes to the generation of a proton gradient across the mitochondrial membrane that is then used for ATP synthesis.</text>
</comment>
<comment type="cofactor">
    <cofactor evidence="3">
        <name>heme b</name>
        <dbReference type="ChEBI" id="CHEBI:60344"/>
    </cofactor>
    <text evidence="3">Binds 2 heme b groups non-covalently.</text>
</comment>
<comment type="subunit">
    <text evidence="3">Fungal cytochrome b-c1 complex contains 10 subunits; 3 respiratory subunits, 2 core proteins and 5 low-molecular weight proteins. Cytochrome b-c1 complex is a homodimer.</text>
</comment>
<comment type="subcellular location">
    <subcellularLocation>
        <location evidence="3">Mitochondrion inner membrane</location>
        <topology evidence="3">Multi-pass membrane protein</topology>
    </subcellularLocation>
</comment>
<comment type="miscellaneous">
    <text evidence="1">Heme 1 (or BL or b562) is low-potential and absorbs at about 562 nm, and heme 2 (or BH or b566) is high-potential and absorbs at about 566 nm.</text>
</comment>
<comment type="similarity">
    <text evidence="4 5">Belongs to the cytochrome b family.</text>
</comment>
<comment type="caution">
    <text evidence="3">The protein contains only eight transmembrane helices, not nine as predicted by bioinformatics tools.</text>
</comment>
<reference key="1">
    <citation type="journal article" date="2005" name="Nucleic Acids Res.">
        <title>Comparative mitochondrial genomics in zygomycetes: bacteria-like RNase P RNAs, mobile elements, and a close source of the group I intron invasion in angiosperms.</title>
        <authorList>
            <person name="Seif E."/>
            <person name="Leigh J."/>
            <person name="Liu Y."/>
            <person name="Roewer I."/>
            <person name="Forget L."/>
            <person name="Lang B.F."/>
        </authorList>
    </citation>
    <scope>NUCLEOTIDE SEQUENCE [LARGE SCALE GENOMIC DNA]</scope>
    <source>
        <strain>DAOM 148428</strain>
    </source>
</reference>
<proteinExistence type="inferred from homology"/>
<feature type="chain" id="PRO_0000061755" description="Cytochrome b">
    <location>
        <begin position="1"/>
        <end position="386"/>
    </location>
</feature>
<feature type="transmembrane region" description="Helical" evidence="3">
    <location>
        <begin position="32"/>
        <end position="52"/>
    </location>
</feature>
<feature type="transmembrane region" description="Helical" evidence="3">
    <location>
        <begin position="76"/>
        <end position="98"/>
    </location>
</feature>
<feature type="transmembrane region" description="Helical" evidence="3">
    <location>
        <begin position="113"/>
        <end position="133"/>
    </location>
</feature>
<feature type="transmembrane region" description="Helical" evidence="3">
    <location>
        <begin position="179"/>
        <end position="199"/>
    </location>
</feature>
<feature type="transmembrane region" description="Helical" evidence="3">
    <location>
        <begin position="225"/>
        <end position="245"/>
    </location>
</feature>
<feature type="transmembrane region" description="Helical" evidence="3">
    <location>
        <begin position="289"/>
        <end position="309"/>
    </location>
</feature>
<feature type="transmembrane region" description="Helical" evidence="3">
    <location>
        <begin position="321"/>
        <end position="341"/>
    </location>
</feature>
<feature type="transmembrane region" description="Helical" evidence="3">
    <location>
        <begin position="348"/>
        <end position="368"/>
    </location>
</feature>
<feature type="binding site" description="axial binding residue" evidence="5">
    <location>
        <position position="82"/>
    </location>
    <ligand>
        <name>heme b</name>
        <dbReference type="ChEBI" id="CHEBI:60344"/>
        <label>b562</label>
    </ligand>
    <ligandPart>
        <name>Fe</name>
        <dbReference type="ChEBI" id="CHEBI:18248"/>
    </ligandPart>
</feature>
<feature type="binding site" description="axial binding residue" evidence="5">
    <location>
        <position position="96"/>
    </location>
    <ligand>
        <name>heme b</name>
        <dbReference type="ChEBI" id="CHEBI:60344"/>
        <label>b566</label>
    </ligand>
    <ligandPart>
        <name>Fe</name>
        <dbReference type="ChEBI" id="CHEBI:18248"/>
    </ligandPart>
</feature>
<feature type="binding site" description="axial binding residue" evidence="5">
    <location>
        <position position="183"/>
    </location>
    <ligand>
        <name>heme b</name>
        <dbReference type="ChEBI" id="CHEBI:60344"/>
        <label>b562</label>
    </ligand>
    <ligandPart>
        <name>Fe</name>
        <dbReference type="ChEBI" id="CHEBI:18248"/>
    </ligandPart>
</feature>
<feature type="binding site" description="axial binding residue" evidence="5">
    <location>
        <position position="197"/>
    </location>
    <ligand>
        <name>heme b</name>
        <dbReference type="ChEBI" id="CHEBI:60344"/>
        <label>b566</label>
    </ligand>
    <ligandPart>
        <name>Fe</name>
        <dbReference type="ChEBI" id="CHEBI:18248"/>
    </ligandPart>
</feature>
<feature type="binding site" evidence="2">
    <location>
        <position position="202"/>
    </location>
    <ligand>
        <name>a ubiquinone</name>
        <dbReference type="ChEBI" id="CHEBI:16389"/>
    </ligand>
</feature>
<geneLocation type="mitochondrion"/>
<evidence type="ECO:0000250" key="1"/>
<evidence type="ECO:0000250" key="2">
    <source>
        <dbReference type="UniProtKB" id="P00157"/>
    </source>
</evidence>
<evidence type="ECO:0000250" key="3">
    <source>
        <dbReference type="UniProtKB" id="P00163"/>
    </source>
</evidence>
<evidence type="ECO:0000255" key="4">
    <source>
        <dbReference type="PROSITE-ProRule" id="PRU00967"/>
    </source>
</evidence>
<evidence type="ECO:0000255" key="5">
    <source>
        <dbReference type="PROSITE-ProRule" id="PRU00968"/>
    </source>
</evidence>
<accession>Q3T4F1</accession>
<name>CYB_RHIOR</name>
<protein>
    <recommendedName>
        <fullName>Cytochrome b</fullName>
    </recommendedName>
    <alternativeName>
        <fullName>Complex III subunit 3</fullName>
    </alternativeName>
    <alternativeName>
        <fullName>Complex III subunit III</fullName>
    </alternativeName>
    <alternativeName>
        <fullName>Cytochrome b-c1 complex subunit 3</fullName>
    </alternativeName>
    <alternativeName>
        <fullName>Ubiquinol-cytochrome-c reductase complex cytochrome b subunit</fullName>
    </alternativeName>
</protein>
<keyword id="KW-0249">Electron transport</keyword>
<keyword id="KW-0349">Heme</keyword>
<keyword id="KW-0408">Iron</keyword>
<keyword id="KW-0472">Membrane</keyword>
<keyword id="KW-0479">Metal-binding</keyword>
<keyword id="KW-0496">Mitochondrion</keyword>
<keyword id="KW-0999">Mitochondrion inner membrane</keyword>
<keyword id="KW-0679">Respiratory chain</keyword>
<keyword id="KW-0812">Transmembrane</keyword>
<keyword id="KW-1133">Transmembrane helix</keyword>
<keyword id="KW-0813">Transport</keyword>
<keyword id="KW-0830">Ubiquinone</keyword>